<reference key="1">
    <citation type="journal article" date="2001" name="Science">
        <title>Comparative genomics of Listeria species.</title>
        <authorList>
            <person name="Glaser P."/>
            <person name="Frangeul L."/>
            <person name="Buchrieser C."/>
            <person name="Rusniok C."/>
            <person name="Amend A."/>
            <person name="Baquero F."/>
            <person name="Berche P."/>
            <person name="Bloecker H."/>
            <person name="Brandt P."/>
            <person name="Chakraborty T."/>
            <person name="Charbit A."/>
            <person name="Chetouani F."/>
            <person name="Couve E."/>
            <person name="de Daruvar A."/>
            <person name="Dehoux P."/>
            <person name="Domann E."/>
            <person name="Dominguez-Bernal G."/>
            <person name="Duchaud E."/>
            <person name="Durant L."/>
            <person name="Dussurget O."/>
            <person name="Entian K.-D."/>
            <person name="Fsihi H."/>
            <person name="Garcia-del Portillo F."/>
            <person name="Garrido P."/>
            <person name="Gautier L."/>
            <person name="Goebel W."/>
            <person name="Gomez-Lopez N."/>
            <person name="Hain T."/>
            <person name="Hauf J."/>
            <person name="Jackson D."/>
            <person name="Jones L.-M."/>
            <person name="Kaerst U."/>
            <person name="Kreft J."/>
            <person name="Kuhn M."/>
            <person name="Kunst F."/>
            <person name="Kurapkat G."/>
            <person name="Madueno E."/>
            <person name="Maitournam A."/>
            <person name="Mata Vicente J."/>
            <person name="Ng E."/>
            <person name="Nedjari H."/>
            <person name="Nordsiek G."/>
            <person name="Novella S."/>
            <person name="de Pablos B."/>
            <person name="Perez-Diaz J.-C."/>
            <person name="Purcell R."/>
            <person name="Remmel B."/>
            <person name="Rose M."/>
            <person name="Schlueter T."/>
            <person name="Simoes N."/>
            <person name="Tierrez A."/>
            <person name="Vazquez-Boland J.-A."/>
            <person name="Voss H."/>
            <person name="Wehland J."/>
            <person name="Cossart P."/>
        </authorList>
    </citation>
    <scope>NUCLEOTIDE SEQUENCE [LARGE SCALE GENOMIC DNA]</scope>
    <source>
        <strain>ATCC BAA-679 / EGD-e</strain>
    </source>
</reference>
<name>NNRD_LISMO</name>
<organism>
    <name type="scientific">Listeria monocytogenes serovar 1/2a (strain ATCC BAA-679 / EGD-e)</name>
    <dbReference type="NCBI Taxonomy" id="169963"/>
    <lineage>
        <taxon>Bacteria</taxon>
        <taxon>Bacillati</taxon>
        <taxon>Bacillota</taxon>
        <taxon>Bacilli</taxon>
        <taxon>Bacillales</taxon>
        <taxon>Listeriaceae</taxon>
        <taxon>Listeria</taxon>
    </lineage>
</organism>
<protein>
    <recommendedName>
        <fullName evidence="1">ADP-dependent (S)-NAD(P)H-hydrate dehydratase</fullName>
        <ecNumber evidence="1">4.2.1.136</ecNumber>
    </recommendedName>
    <alternativeName>
        <fullName evidence="1">ADP-dependent NAD(P)HX dehydratase</fullName>
    </alternativeName>
</protein>
<proteinExistence type="inferred from homology"/>
<accession>Q8Y6R2</accession>
<keyword id="KW-0067">ATP-binding</keyword>
<keyword id="KW-0456">Lyase</keyword>
<keyword id="KW-0520">NAD</keyword>
<keyword id="KW-0521">NADP</keyword>
<keyword id="KW-0547">Nucleotide-binding</keyword>
<keyword id="KW-1185">Reference proteome</keyword>
<comment type="function">
    <text evidence="1">Catalyzes the dehydration of the S-form of NAD(P)HX at the expense of ADP, which is converted to AMP. Together with NAD(P)HX epimerase, which catalyzes the epimerization of the S- and R-forms, the enzyme allows the repair of both epimers of NAD(P)HX, a damaged form of NAD(P)H that is a result of enzymatic or heat-dependent hydration.</text>
</comment>
<comment type="catalytic activity">
    <reaction evidence="1">
        <text>(6S)-NADHX + ADP = AMP + phosphate + NADH + H(+)</text>
        <dbReference type="Rhea" id="RHEA:32223"/>
        <dbReference type="ChEBI" id="CHEBI:15378"/>
        <dbReference type="ChEBI" id="CHEBI:43474"/>
        <dbReference type="ChEBI" id="CHEBI:57945"/>
        <dbReference type="ChEBI" id="CHEBI:64074"/>
        <dbReference type="ChEBI" id="CHEBI:456215"/>
        <dbReference type="ChEBI" id="CHEBI:456216"/>
        <dbReference type="EC" id="4.2.1.136"/>
    </reaction>
</comment>
<comment type="catalytic activity">
    <reaction evidence="1">
        <text>(6S)-NADPHX + ADP = AMP + phosphate + NADPH + H(+)</text>
        <dbReference type="Rhea" id="RHEA:32235"/>
        <dbReference type="ChEBI" id="CHEBI:15378"/>
        <dbReference type="ChEBI" id="CHEBI:43474"/>
        <dbReference type="ChEBI" id="CHEBI:57783"/>
        <dbReference type="ChEBI" id="CHEBI:64076"/>
        <dbReference type="ChEBI" id="CHEBI:456215"/>
        <dbReference type="ChEBI" id="CHEBI:456216"/>
        <dbReference type="EC" id="4.2.1.136"/>
    </reaction>
</comment>
<comment type="cofactor">
    <cofactor evidence="1">
        <name>Mg(2+)</name>
        <dbReference type="ChEBI" id="CHEBI:18420"/>
    </cofactor>
</comment>
<comment type="subunit">
    <text evidence="1">Homotetramer.</text>
</comment>
<comment type="similarity">
    <text evidence="1">Belongs to the NnrD/CARKD family.</text>
</comment>
<feature type="chain" id="PRO_0000416145" description="ADP-dependent (S)-NAD(P)H-hydrate dehydratase">
    <location>
        <begin position="1"/>
        <end position="276"/>
    </location>
</feature>
<feature type="domain" description="YjeF C-terminal" evidence="1">
    <location>
        <begin position="5"/>
        <end position="269"/>
    </location>
</feature>
<feature type="binding site" evidence="1">
    <location>
        <position position="40"/>
    </location>
    <ligand>
        <name>(6S)-NADPHX</name>
        <dbReference type="ChEBI" id="CHEBI:64076"/>
    </ligand>
</feature>
<feature type="binding site" evidence="1">
    <location>
        <position position="103"/>
    </location>
    <ligand>
        <name>(6S)-NADPHX</name>
        <dbReference type="ChEBI" id="CHEBI:64076"/>
    </ligand>
</feature>
<feature type="binding site" evidence="1">
    <location>
        <position position="152"/>
    </location>
    <ligand>
        <name>(6S)-NADPHX</name>
        <dbReference type="ChEBI" id="CHEBI:64076"/>
    </ligand>
</feature>
<feature type="binding site" evidence="1">
    <location>
        <position position="211"/>
    </location>
    <ligand>
        <name>AMP</name>
        <dbReference type="ChEBI" id="CHEBI:456215"/>
    </ligand>
</feature>
<feature type="binding site" evidence="1">
    <location>
        <position position="212"/>
    </location>
    <ligand>
        <name>(6S)-NADPHX</name>
        <dbReference type="ChEBI" id="CHEBI:64076"/>
    </ligand>
</feature>
<sequence length="276" mass="29796">MKKITPKAMCAWIPKREDETHKGDYGRVLIVAGNKQFGGAAIMAAEACVKSGAGLTTVASDSVNRPALQTRIPECMFIDYENITSLSEQISQFDTILIGPGLGLDAYAEEIFRLVLQKSTEHQQVIIDGDGITIYAKGENPHPAAKLTFTPHAGEWERLKVLAPDAVTPTDVALAIDATIVLKGHRTKVYSGESAWQNMYGTPAMATGGMGDTLAGTICGLMAQTEKPITGTLAAVFLHSYIGEILAKKRYVVLPTEIAEELPTYLKIFSETDEHA</sequence>
<dbReference type="EC" id="4.2.1.136" evidence="1"/>
<dbReference type="EMBL" id="AL591980">
    <property type="protein sequence ID" value="CAC99700.1"/>
    <property type="molecule type" value="Genomic_DNA"/>
</dbReference>
<dbReference type="PIR" id="AF1277">
    <property type="entry name" value="AF1277"/>
</dbReference>
<dbReference type="RefSeq" id="NP_465147.1">
    <property type="nucleotide sequence ID" value="NC_003210.1"/>
</dbReference>
<dbReference type="RefSeq" id="WP_003732536.1">
    <property type="nucleotide sequence ID" value="NZ_CP149495.1"/>
</dbReference>
<dbReference type="SMR" id="Q8Y6R2"/>
<dbReference type="STRING" id="169963.gene:17594279"/>
<dbReference type="PaxDb" id="169963-lmo1622"/>
<dbReference type="EnsemblBacteria" id="CAC99700">
    <property type="protein sequence ID" value="CAC99700"/>
    <property type="gene ID" value="CAC99700"/>
</dbReference>
<dbReference type="GeneID" id="985726"/>
<dbReference type="KEGG" id="lmo:lmo1622"/>
<dbReference type="PATRIC" id="fig|169963.11.peg.1665"/>
<dbReference type="eggNOG" id="COG0063">
    <property type="taxonomic scope" value="Bacteria"/>
</dbReference>
<dbReference type="HOGENOM" id="CLU_024853_2_1_9"/>
<dbReference type="OrthoDB" id="9806925at2"/>
<dbReference type="PhylomeDB" id="Q8Y6R2"/>
<dbReference type="BioCyc" id="LMON169963:LMO1622-MONOMER"/>
<dbReference type="Proteomes" id="UP000000817">
    <property type="component" value="Chromosome"/>
</dbReference>
<dbReference type="GO" id="GO:0052855">
    <property type="term" value="F:ADP-dependent NAD(P)H-hydrate dehydratase activity"/>
    <property type="evidence" value="ECO:0000318"/>
    <property type="project" value="GO_Central"/>
</dbReference>
<dbReference type="GO" id="GO:0005524">
    <property type="term" value="F:ATP binding"/>
    <property type="evidence" value="ECO:0007669"/>
    <property type="project" value="UniProtKB-KW"/>
</dbReference>
<dbReference type="GO" id="GO:0052856">
    <property type="term" value="F:NAD(P)HX epimerase activity"/>
    <property type="evidence" value="ECO:0000318"/>
    <property type="project" value="GO_Central"/>
</dbReference>
<dbReference type="GO" id="GO:0110051">
    <property type="term" value="P:metabolite repair"/>
    <property type="evidence" value="ECO:0000318"/>
    <property type="project" value="GO_Central"/>
</dbReference>
<dbReference type="GO" id="GO:0046496">
    <property type="term" value="P:nicotinamide nucleotide metabolic process"/>
    <property type="evidence" value="ECO:0007669"/>
    <property type="project" value="UniProtKB-UniRule"/>
</dbReference>
<dbReference type="CDD" id="cd01171">
    <property type="entry name" value="YXKO-related"/>
    <property type="match status" value="1"/>
</dbReference>
<dbReference type="Gene3D" id="3.40.1190.20">
    <property type="match status" value="1"/>
</dbReference>
<dbReference type="HAMAP" id="MF_01965">
    <property type="entry name" value="NADHX_dehydratase"/>
    <property type="match status" value="1"/>
</dbReference>
<dbReference type="InterPro" id="IPR017953">
    <property type="entry name" value="Carbohydrate_kinase_pred_CS"/>
</dbReference>
<dbReference type="InterPro" id="IPR000631">
    <property type="entry name" value="CARKD"/>
</dbReference>
<dbReference type="InterPro" id="IPR029056">
    <property type="entry name" value="Ribokinase-like"/>
</dbReference>
<dbReference type="NCBIfam" id="TIGR00196">
    <property type="entry name" value="yjeF_cterm"/>
    <property type="match status" value="1"/>
</dbReference>
<dbReference type="PANTHER" id="PTHR12592:SF0">
    <property type="entry name" value="ATP-DEPENDENT (S)-NAD(P)H-HYDRATE DEHYDRATASE"/>
    <property type="match status" value="1"/>
</dbReference>
<dbReference type="PANTHER" id="PTHR12592">
    <property type="entry name" value="ATP-DEPENDENT (S)-NAD(P)H-HYDRATE DEHYDRATASE FAMILY MEMBER"/>
    <property type="match status" value="1"/>
</dbReference>
<dbReference type="Pfam" id="PF01256">
    <property type="entry name" value="Carb_kinase"/>
    <property type="match status" value="1"/>
</dbReference>
<dbReference type="SUPFAM" id="SSF53613">
    <property type="entry name" value="Ribokinase-like"/>
    <property type="match status" value="1"/>
</dbReference>
<dbReference type="PROSITE" id="PS01050">
    <property type="entry name" value="YJEF_C_2"/>
    <property type="match status" value="1"/>
</dbReference>
<dbReference type="PROSITE" id="PS51383">
    <property type="entry name" value="YJEF_C_3"/>
    <property type="match status" value="1"/>
</dbReference>
<evidence type="ECO:0000255" key="1">
    <source>
        <dbReference type="HAMAP-Rule" id="MF_01965"/>
    </source>
</evidence>
<gene>
    <name evidence="1" type="primary">nnrD</name>
    <name type="ordered locus">lmo1622</name>
</gene>